<protein>
    <recommendedName>
        <fullName evidence="1">Translation initiation factor 6</fullName>
        <shortName evidence="1">aIF-6</shortName>
    </recommendedName>
</protein>
<accession>P38619</accession>
<accession>Q4J8U4</accession>
<evidence type="ECO:0000255" key="1">
    <source>
        <dbReference type="HAMAP-Rule" id="MF_00032"/>
    </source>
</evidence>
<evidence type="ECO:0000305" key="2"/>
<keyword id="KW-0396">Initiation factor</keyword>
<keyword id="KW-0648">Protein biosynthesis</keyword>
<keyword id="KW-1185">Reference proteome</keyword>
<dbReference type="EMBL" id="X77509">
    <property type="protein sequence ID" value="CAA54640.1"/>
    <property type="status" value="ALT_FRAME"/>
    <property type="molecule type" value="Genomic_DNA"/>
</dbReference>
<dbReference type="EMBL" id="CP000077">
    <property type="protein sequence ID" value="AAY80786.1"/>
    <property type="molecule type" value="Genomic_DNA"/>
</dbReference>
<dbReference type="PIR" id="S53700">
    <property type="entry name" value="S53700"/>
</dbReference>
<dbReference type="RefSeq" id="WP_011278288.1">
    <property type="nucleotide sequence ID" value="NC_007181.1"/>
</dbReference>
<dbReference type="SMR" id="P38619"/>
<dbReference type="STRING" id="330779.Saci_1465"/>
<dbReference type="GeneID" id="14551960"/>
<dbReference type="KEGG" id="sai:Saci_1465"/>
<dbReference type="PATRIC" id="fig|330779.12.peg.1409"/>
<dbReference type="eggNOG" id="arCOG04176">
    <property type="taxonomic scope" value="Archaea"/>
</dbReference>
<dbReference type="HOGENOM" id="CLU_071894_1_0_2"/>
<dbReference type="Proteomes" id="UP000001018">
    <property type="component" value="Chromosome"/>
</dbReference>
<dbReference type="GO" id="GO:0043022">
    <property type="term" value="F:ribosome binding"/>
    <property type="evidence" value="ECO:0007669"/>
    <property type="project" value="InterPro"/>
</dbReference>
<dbReference type="GO" id="GO:0003743">
    <property type="term" value="F:translation initiation factor activity"/>
    <property type="evidence" value="ECO:0007669"/>
    <property type="project" value="UniProtKB-UniRule"/>
</dbReference>
<dbReference type="GO" id="GO:0042256">
    <property type="term" value="P:cytosolic ribosome assembly"/>
    <property type="evidence" value="ECO:0007669"/>
    <property type="project" value="InterPro"/>
</dbReference>
<dbReference type="CDD" id="cd00527">
    <property type="entry name" value="IF6"/>
    <property type="match status" value="1"/>
</dbReference>
<dbReference type="Gene3D" id="3.75.10.10">
    <property type="entry name" value="L-arginine/glycine Amidinotransferase, Chain A"/>
    <property type="match status" value="1"/>
</dbReference>
<dbReference type="HAMAP" id="MF_00032">
    <property type="entry name" value="eIF_6"/>
    <property type="match status" value="1"/>
</dbReference>
<dbReference type="InterPro" id="IPR002769">
    <property type="entry name" value="eIF6"/>
</dbReference>
<dbReference type="NCBIfam" id="TIGR00323">
    <property type="entry name" value="eIF-6"/>
    <property type="match status" value="1"/>
</dbReference>
<dbReference type="NCBIfam" id="NF003126">
    <property type="entry name" value="PRK04046.1-1"/>
    <property type="match status" value="1"/>
</dbReference>
<dbReference type="PANTHER" id="PTHR10784">
    <property type="entry name" value="TRANSLATION INITIATION FACTOR 6"/>
    <property type="match status" value="1"/>
</dbReference>
<dbReference type="Pfam" id="PF01912">
    <property type="entry name" value="eIF-6"/>
    <property type="match status" value="1"/>
</dbReference>
<dbReference type="PIRSF" id="PIRSF006413">
    <property type="entry name" value="IF-6"/>
    <property type="match status" value="1"/>
</dbReference>
<dbReference type="SMART" id="SM00654">
    <property type="entry name" value="eIF6"/>
    <property type="match status" value="1"/>
</dbReference>
<dbReference type="SUPFAM" id="SSF55909">
    <property type="entry name" value="Pentein"/>
    <property type="match status" value="1"/>
</dbReference>
<reference key="1">
    <citation type="journal article" date="1995" name="Biochim. Biophys. Acta">
        <title>Nucleotide sequence of a gene cluster encoding ribosomal proteins in the thermoacidophilic crenarchaeon Sulfolobus acidocaldarius.</title>
        <authorList>
            <person name="Moll R."/>
            <person name="Schmidtke S."/>
            <person name="Schaefer G."/>
        </authorList>
    </citation>
    <scope>NUCLEOTIDE SEQUENCE [GENOMIC DNA]</scope>
    <source>
        <strain>ATCC 33909 / DSM 639 / JCM 8929 / NBRC 15157 / NCIMB 11770</strain>
    </source>
</reference>
<reference key="2">
    <citation type="journal article" date="2005" name="J. Bacteriol.">
        <title>The genome of Sulfolobus acidocaldarius, a model organism of the Crenarchaeota.</title>
        <authorList>
            <person name="Chen L."/>
            <person name="Bruegger K."/>
            <person name="Skovgaard M."/>
            <person name="Redder P."/>
            <person name="She Q."/>
            <person name="Torarinsson E."/>
            <person name="Greve B."/>
            <person name="Awayez M."/>
            <person name="Zibat A."/>
            <person name="Klenk H.-P."/>
            <person name="Garrett R.A."/>
        </authorList>
    </citation>
    <scope>NUCLEOTIDE SEQUENCE [LARGE SCALE GENOMIC DNA]</scope>
    <source>
        <strain>ATCC 33909 / DSM 639 / JCM 8929 / NBRC 15157 / NCIMB 11770</strain>
    </source>
</reference>
<organism>
    <name type="scientific">Sulfolobus acidocaldarius (strain ATCC 33909 / DSM 639 / JCM 8929 / NBRC 15157 / NCIMB 11770)</name>
    <dbReference type="NCBI Taxonomy" id="330779"/>
    <lineage>
        <taxon>Archaea</taxon>
        <taxon>Thermoproteota</taxon>
        <taxon>Thermoprotei</taxon>
        <taxon>Sulfolobales</taxon>
        <taxon>Sulfolobaceae</taxon>
        <taxon>Sulfolobus</taxon>
    </lineage>
</organism>
<gene>
    <name evidence="1" type="primary">eif6</name>
    <name type="ordered locus">Saci_1465</name>
</gene>
<sequence>MILDKLSIFGTDNIGIYIFTNDKYTIIPKIDDKEVIEKIQGILKTEIIQTTISKSVLVGILVTGNNDVILLPRTALADEIKVIKEQAKDVRVEVVDIRPTALGNIILSNTHGALIYQDLSEAEINKVKKALQIDTAIKGTIANIITVGSVAVITDKAGLVHIDATEEELKKLSELFKVKLDSGTVNFGSVFIRSGLVANRNGVLVGSSTTGAEILRIQRAFSD</sequence>
<feature type="chain" id="PRO_0000153758" description="Translation initiation factor 6">
    <location>
        <begin position="1"/>
        <end position="223"/>
    </location>
</feature>
<comment type="function">
    <text evidence="1">Binds to the 50S ribosomal subunit and prevents its association with the 30S ribosomal subunit to form the 70S initiation complex.</text>
</comment>
<comment type="similarity">
    <text evidence="1">Belongs to the eIF-6 family.</text>
</comment>
<comment type="sequence caution" evidence="2">
    <conflict type="frameshift">
        <sequence resource="EMBL-CDS" id="CAA54640"/>
    </conflict>
</comment>
<name>IF6_SULAC</name>
<proteinExistence type="inferred from homology"/>